<feature type="chain" id="PRO_0000442586" description="GDP-polyphosphate phosphotransferase">
    <location>
        <begin position="1"/>
        <end position="295"/>
    </location>
</feature>
<feature type="region of interest" description="Disordered" evidence="1">
    <location>
        <begin position="1"/>
        <end position="28"/>
    </location>
</feature>
<feature type="compositionally biased region" description="Polar residues" evidence="1">
    <location>
        <begin position="7"/>
        <end position="16"/>
    </location>
</feature>
<feature type="modified residue" description="Phosphohistidine" evidence="4">
    <location>
        <position position="115"/>
    </location>
</feature>
<feature type="modified residue" description="Phosphohistidine" evidence="4">
    <location>
        <position position="247"/>
    </location>
</feature>
<feature type="mutagenesis site" description="Partial loss of GTP-synthesizing activity." evidence="2">
    <original>F</original>
    <variation>A</variation>
    <location>
        <position position="67"/>
    </location>
</feature>
<feature type="mutagenesis site" description="Partial loss of GTP-synthesizing activity." evidence="2">
    <original>G</original>
    <variation>R</variation>
    <location>
        <position position="69"/>
    </location>
</feature>
<feature type="mutagenesis site" description="Loss of GTP-synthesizing activity and lack of autophosphorylation. Does not interact with Ndk." evidence="2">
    <original>G</original>
    <variation>R</variation>
    <location>
        <position position="74"/>
    </location>
</feature>
<feature type="mutagenesis site" description="Partial loss of GTP-synthesizing activity." evidence="2">
    <original>K</original>
    <variation>A</variation>
    <location>
        <position position="75"/>
    </location>
</feature>
<feature type="mutagenesis site" description="Partial loss of GTP-synthesizing activity and decrease in autophosphorylation. Loss of GTP-synthesizing activity and lack of autophosphorylation; when associated with A-247." evidence="2">
    <original>H</original>
    <variation>A</variation>
    <location>
        <position position="115"/>
    </location>
</feature>
<feature type="mutagenesis site" description="Partial loss of GTP-synthesizing activity and decrease in autophosphorylation. Loss of GTP-synthesizing activity and lack of autophosphorylation; when associated with A-115." evidence="2">
    <original>H</original>
    <variation>A</variation>
    <location>
        <position position="247"/>
    </location>
</feature>
<accession>O05877</accession>
<accession>A5YKM3</accession>
<accession>F2GKA8</accession>
<accession>Q7D5V8</accession>
<keyword id="KW-0418">Kinase</keyword>
<keyword id="KW-0597">Phosphoprotein</keyword>
<keyword id="KW-1185">Reference proteome</keyword>
<keyword id="KW-0808">Transferase</keyword>
<evidence type="ECO:0000256" key="1">
    <source>
        <dbReference type="SAM" id="MobiDB-lite"/>
    </source>
</evidence>
<evidence type="ECO:0000269" key="2">
    <source>
    </source>
</evidence>
<evidence type="ECO:0000305" key="3"/>
<evidence type="ECO:0000305" key="4">
    <source>
    </source>
</evidence>
<evidence type="ECO:0000312" key="5">
    <source>
        <dbReference type="EMBL" id="ABQ58103.1"/>
    </source>
</evidence>
<evidence type="ECO:0000312" key="6">
    <source>
        <dbReference type="EMBL" id="CCP46051.1"/>
    </source>
</evidence>
<comment type="function">
    <text evidence="2">Uses inorganic polyphosphate (polyP) as a donor to convert GDP to GTP. In addition, modulates nucleotide triphosphate synthesis catalyzed by the nucleoside diphosphate kinase (Ndk) in favor of GTP production over CTP or UTP. Plays an important role in survival of M.tuberculosis in macrophages.</text>
</comment>
<comment type="catalytic activity">
    <reaction evidence="2">
        <text>[phosphate](n) + GTP = [phosphate](n+1) + GDP</text>
        <dbReference type="Rhea" id="RHEA:55412"/>
        <dbReference type="Rhea" id="RHEA-COMP:9859"/>
        <dbReference type="Rhea" id="RHEA-COMP:14280"/>
        <dbReference type="ChEBI" id="CHEBI:16838"/>
        <dbReference type="ChEBI" id="CHEBI:37565"/>
        <dbReference type="ChEBI" id="CHEBI:58189"/>
    </reaction>
    <physiologicalReaction direction="right-to-left" evidence="2">
        <dbReference type="Rhea" id="RHEA:55414"/>
    </physiologicalReaction>
</comment>
<comment type="subunit">
    <text evidence="2">Interacts with Ndk.</text>
</comment>
<comment type="induction">
    <text evidence="2">Expression increases during the exponential phase of growth and remains at a steady level up to the stationary phase.</text>
</comment>
<comment type="PTM">
    <text evidence="2">Autophosphorylated at His-115 and His-247 using polyP as a phosphate donor.</text>
</comment>
<comment type="similarity">
    <text evidence="3">Belongs to the polyphosphate kinase 2 (PPK2) family. Class I subfamily.</text>
</comment>
<gene>
    <name evidence="5" type="primary">ppk2</name>
    <name evidence="6" type="ordered locus">Rv3232c</name>
</gene>
<sequence>MDIPSVDVSTATNDGASSRAKGHRSAAPGRRKISDAVYQAELFRLQTEFVKLQEWARHSGARLVVIFEGRDGAGKGGAIKRITEYLNPRVARIAALPAPTDRERGQWYYQRYIAHLPAKGEIVLFDRSWYNRAGVEKVMGFCTPQEYVLFLRQTPIFEQMLIDDGILLRKYWFSVSDAEQLRRFKARRNDPVRQWKLSPMDLESVYRWEDYSRAKDEMMVHTDTPVSPWYVVESDIKKHARLNMMAHLLSTIDYADVEKPKVKLPPRPLVSGNYRRPPRELSTYVDDYVATLIAR</sequence>
<organism>
    <name type="scientific">Mycobacterium tuberculosis (strain ATCC 25618 / H37Rv)</name>
    <dbReference type="NCBI Taxonomy" id="83332"/>
    <lineage>
        <taxon>Bacteria</taxon>
        <taxon>Bacillati</taxon>
        <taxon>Actinomycetota</taxon>
        <taxon>Actinomycetes</taxon>
        <taxon>Mycobacteriales</taxon>
        <taxon>Mycobacteriaceae</taxon>
        <taxon>Mycobacterium</taxon>
        <taxon>Mycobacterium tuberculosis complex</taxon>
    </lineage>
</organism>
<reference key="1">
    <citation type="submission" date="2007-04" db="EMBL/GenBank/DDBJ databases">
        <title>Cloning and expression of polyphosphate kinase 2 from Mycobacterium tuberculosis H37Rv.</title>
        <authorList>
            <person name="Kim H.-Y."/>
            <person name="Ravikumar V."/>
        </authorList>
    </citation>
    <scope>NUCLEOTIDE SEQUENCE [GENOMIC DNA]</scope>
    <source>
        <strain>H37Rv</strain>
    </source>
</reference>
<reference key="2">
    <citation type="journal article" date="1998" name="Nature">
        <title>Deciphering the biology of Mycobacterium tuberculosis from the complete genome sequence.</title>
        <authorList>
            <person name="Cole S.T."/>
            <person name="Brosch R."/>
            <person name="Parkhill J."/>
            <person name="Garnier T."/>
            <person name="Churcher C.M."/>
            <person name="Harris D.E."/>
            <person name="Gordon S.V."/>
            <person name="Eiglmeier K."/>
            <person name="Gas S."/>
            <person name="Barry C.E. III"/>
            <person name="Tekaia F."/>
            <person name="Badcock K."/>
            <person name="Basham D."/>
            <person name="Brown D."/>
            <person name="Chillingworth T."/>
            <person name="Connor R."/>
            <person name="Davies R.M."/>
            <person name="Devlin K."/>
            <person name="Feltwell T."/>
            <person name="Gentles S."/>
            <person name="Hamlin N."/>
            <person name="Holroyd S."/>
            <person name="Hornsby T."/>
            <person name="Jagels K."/>
            <person name="Krogh A."/>
            <person name="McLean J."/>
            <person name="Moule S."/>
            <person name="Murphy L.D."/>
            <person name="Oliver S."/>
            <person name="Osborne J."/>
            <person name="Quail M.A."/>
            <person name="Rajandream M.A."/>
            <person name="Rogers J."/>
            <person name="Rutter S."/>
            <person name="Seeger K."/>
            <person name="Skelton S."/>
            <person name="Squares S."/>
            <person name="Squares R."/>
            <person name="Sulston J.E."/>
            <person name="Taylor K."/>
            <person name="Whitehead S."/>
            <person name="Barrell B.G."/>
        </authorList>
    </citation>
    <scope>NUCLEOTIDE SEQUENCE [LARGE SCALE GENOMIC DNA]</scope>
    <source>
        <strain>ATCC 25618 / H37Rv</strain>
    </source>
</reference>
<reference key="3">
    <citation type="journal article" date="2009" name="Mol. Microbiol.">
        <title>Polyphosphate kinase 2: a modulator of nucleoside diphosphate kinase activity in mycobacteria.</title>
        <authorList>
            <person name="Sureka K."/>
            <person name="Sanyal S."/>
            <person name="Basu J."/>
            <person name="Kundu M."/>
        </authorList>
    </citation>
    <scope>FUNCTION</scope>
    <scope>CATALYTIC ACTIVITY</scope>
    <scope>INTERACTION WITH NDK</scope>
    <scope>INDUCTION</scope>
    <scope>PHOSPHORYLATION AT HIS-115 AND HIS-247</scope>
    <scope>MUTAGENESIS OF PHE-67; GLY-69; GLY-74; LYS-75; HIS-115 AND HIS-247</scope>
</reference>
<reference key="4">
    <citation type="journal article" date="2011" name="Mol. Cell. Proteomics">
        <title>Proteogenomic analysis of Mycobacterium tuberculosis by high resolution mass spectrometry.</title>
        <authorList>
            <person name="Kelkar D.S."/>
            <person name="Kumar D."/>
            <person name="Kumar P."/>
            <person name="Balakrishnan L."/>
            <person name="Muthusamy B."/>
            <person name="Yadav A.K."/>
            <person name="Shrivastava P."/>
            <person name="Marimuthu A."/>
            <person name="Anand S."/>
            <person name="Sundaram H."/>
            <person name="Kingsbury R."/>
            <person name="Harsha H.C."/>
            <person name="Nair B."/>
            <person name="Prasad T.S."/>
            <person name="Chauhan D.S."/>
            <person name="Katoch K."/>
            <person name="Katoch V.M."/>
            <person name="Kumar P."/>
            <person name="Chaerkady R."/>
            <person name="Ramachandran S."/>
            <person name="Dash D."/>
            <person name="Pandey A."/>
        </authorList>
    </citation>
    <scope>IDENTIFICATION BY MASS SPECTROMETRY [LARGE SCALE ANALYSIS]</scope>
    <source>
        <strain>ATCC 25618 / H37Rv</strain>
    </source>
</reference>
<dbReference type="EC" id="2.7.4.-" evidence="2"/>
<dbReference type="EMBL" id="EF555554">
    <property type="protein sequence ID" value="ABQ58103.1"/>
    <property type="molecule type" value="Genomic_DNA"/>
</dbReference>
<dbReference type="EMBL" id="AL123456">
    <property type="protein sequence ID" value="CCP46051.1"/>
    <property type="molecule type" value="Genomic_DNA"/>
</dbReference>
<dbReference type="RefSeq" id="NP_217749.1">
    <property type="nucleotide sequence ID" value="NC_000962.3"/>
</dbReference>
<dbReference type="RefSeq" id="WP_003416928.1">
    <property type="nucleotide sequence ID" value="NC_000962.3"/>
</dbReference>
<dbReference type="SMR" id="O05877"/>
<dbReference type="FunCoup" id="O05877">
    <property type="interactions" value="57"/>
</dbReference>
<dbReference type="STRING" id="83332.Rv3232c"/>
<dbReference type="iPTMnet" id="O05877"/>
<dbReference type="PaxDb" id="83332-Rv3232c"/>
<dbReference type="DNASU" id="888760"/>
<dbReference type="GeneID" id="888760"/>
<dbReference type="KEGG" id="mtu:Rv3232c"/>
<dbReference type="KEGG" id="mtv:RVBD_3232c"/>
<dbReference type="PATRIC" id="fig|83332.111.peg.3610"/>
<dbReference type="TubercuList" id="Rv3232c"/>
<dbReference type="eggNOG" id="COG2326">
    <property type="taxonomic scope" value="Bacteria"/>
</dbReference>
<dbReference type="InParanoid" id="O05877"/>
<dbReference type="OrthoDB" id="9775224at2"/>
<dbReference type="PhylomeDB" id="O05877"/>
<dbReference type="BRENDA" id="2.7.4.1">
    <property type="organism ID" value="3445"/>
</dbReference>
<dbReference type="BRENDA" id="2.7.4.34">
    <property type="organism ID" value="3445"/>
</dbReference>
<dbReference type="PHI-base" id="PHI:3634"/>
<dbReference type="Proteomes" id="UP000001584">
    <property type="component" value="Chromosome"/>
</dbReference>
<dbReference type="GO" id="GO:0005886">
    <property type="term" value="C:plasma membrane"/>
    <property type="evidence" value="ECO:0000314"/>
    <property type="project" value="MTBBASE"/>
</dbReference>
<dbReference type="GO" id="GO:0005525">
    <property type="term" value="F:GTP binding"/>
    <property type="evidence" value="ECO:0000314"/>
    <property type="project" value="MTBBASE"/>
</dbReference>
<dbReference type="GO" id="GO:0008976">
    <property type="term" value="F:polyphosphate kinase activity"/>
    <property type="evidence" value="ECO:0000314"/>
    <property type="project" value="MTBBASE"/>
</dbReference>
<dbReference type="GO" id="GO:0006183">
    <property type="term" value="P:GTP biosynthetic process"/>
    <property type="evidence" value="ECO:0000315"/>
    <property type="project" value="MTBBASE"/>
</dbReference>
<dbReference type="FunFam" id="3.40.50.300:FF:002388">
    <property type="entry name" value="Polyphosphate:NDP phosphotransferase 2"/>
    <property type="match status" value="1"/>
</dbReference>
<dbReference type="Gene3D" id="3.40.50.300">
    <property type="entry name" value="P-loop containing nucleotide triphosphate hydrolases"/>
    <property type="match status" value="1"/>
</dbReference>
<dbReference type="InterPro" id="IPR027417">
    <property type="entry name" value="P-loop_NTPase"/>
</dbReference>
<dbReference type="InterPro" id="IPR016898">
    <property type="entry name" value="Polyphosphate_phosphotransfera"/>
</dbReference>
<dbReference type="InterPro" id="IPR022488">
    <property type="entry name" value="PPK2-related"/>
</dbReference>
<dbReference type="InterPro" id="IPR022486">
    <property type="entry name" value="PPK2_PA0141"/>
</dbReference>
<dbReference type="NCBIfam" id="TIGR03707">
    <property type="entry name" value="PPK2_P_aer"/>
    <property type="match status" value="1"/>
</dbReference>
<dbReference type="PANTHER" id="PTHR34383:SF1">
    <property type="entry name" value="ADP-POLYPHOSPHATE PHOSPHOTRANSFERASE"/>
    <property type="match status" value="1"/>
</dbReference>
<dbReference type="PANTHER" id="PTHR34383">
    <property type="entry name" value="POLYPHOSPHATE:AMP PHOSPHOTRANSFERASE-RELATED"/>
    <property type="match status" value="1"/>
</dbReference>
<dbReference type="Pfam" id="PF03976">
    <property type="entry name" value="PPK2"/>
    <property type="match status" value="1"/>
</dbReference>
<dbReference type="PIRSF" id="PIRSF028756">
    <property type="entry name" value="PPK2_prd"/>
    <property type="match status" value="1"/>
</dbReference>
<dbReference type="SUPFAM" id="SSF52540">
    <property type="entry name" value="P-loop containing nucleoside triphosphate hydrolases"/>
    <property type="match status" value="1"/>
</dbReference>
<name>PK21_MYCTU</name>
<proteinExistence type="evidence at protein level"/>
<protein>
    <recommendedName>
        <fullName evidence="3">GDP-polyphosphate phosphotransferase</fullName>
        <ecNumber evidence="2">2.7.4.-</ecNumber>
    </recommendedName>
    <alternativeName>
        <fullName evidence="3">Polyphosphate kinase PPK2</fullName>
    </alternativeName>
</protein>